<proteinExistence type="inferred from homology"/>
<reference key="1">
    <citation type="journal article" date="2002" name="Nat. Genet.">
        <title>Genome sequence of the endocellular obligate symbiont of tsetse flies, Wigglesworthia glossinidia.</title>
        <authorList>
            <person name="Akman L."/>
            <person name="Yamashita A."/>
            <person name="Watanabe H."/>
            <person name="Oshima K."/>
            <person name="Shiba T."/>
            <person name="Hattori M."/>
            <person name="Aksoy S."/>
        </authorList>
    </citation>
    <scope>NUCLEOTIDE SEQUENCE [LARGE SCALE GENOMIC DNA]</scope>
</reference>
<evidence type="ECO:0000255" key="1"/>
<evidence type="ECO:0000255" key="2">
    <source>
        <dbReference type="HAMAP-Rule" id="MF_01260"/>
    </source>
</evidence>
<organism>
    <name type="scientific">Wigglesworthia glossinidia brevipalpis</name>
    <dbReference type="NCBI Taxonomy" id="36870"/>
    <lineage>
        <taxon>Bacteria</taxon>
        <taxon>Pseudomonadati</taxon>
        <taxon>Pseudomonadota</taxon>
        <taxon>Gammaproteobacteria</taxon>
        <taxon>Enterobacterales</taxon>
        <taxon>Erwiniaceae</taxon>
        <taxon>Wigglesworthia</taxon>
    </lineage>
</organism>
<gene>
    <name evidence="2" type="primary">bioH</name>
    <name type="ordered locus">WIGBR5850</name>
</gene>
<protein>
    <recommendedName>
        <fullName evidence="2">Pimeloyl-[acyl-carrier protein] methyl ester esterase</fullName>
        <ecNumber evidence="2">3.1.1.85</ecNumber>
    </recommendedName>
    <alternativeName>
        <fullName evidence="2">Biotin synthesis protein BioH</fullName>
    </alternativeName>
    <alternativeName>
        <fullName evidence="2">Carboxylesterase BioH</fullName>
    </alternativeName>
</protein>
<sequence>MKPFFWRIIGSGSVNLVFIHGWGLNSCIWNNIIIILSNYFKLHLVDLPGYGKNILYKEYSFSKITEIIACKSPKKSILIGWSLGGLIATNISIVYPEKFKGLIIVSSSPCFCEKKDWPGIKKEILNNFSFQLKNDFHNTVKKFFNIQFLGTKKNNNEIKKLKNIFFRQKEPSYKTLSSGLKILKNIDIRNYLKYIKIPTLRIYGNLDVIVPVKIIPIIKKLQNFNINKNIIIPSASHAPFLSHPFLFCKIIKYFIKKFN</sequence>
<feature type="chain" id="PRO_0000204500" description="Pimeloyl-[acyl-carrier protein] methyl ester esterase">
    <location>
        <begin position="1"/>
        <end position="259"/>
    </location>
</feature>
<feature type="domain" description="AB hydrolase-1" evidence="1">
    <location>
        <begin position="16"/>
        <end position="244"/>
    </location>
</feature>
<feature type="active site" description="Nucleophile" evidence="2">
    <location>
        <position position="82"/>
    </location>
</feature>
<feature type="active site" evidence="2">
    <location>
        <position position="207"/>
    </location>
</feature>
<feature type="active site" evidence="2">
    <location>
        <position position="237"/>
    </location>
</feature>
<feature type="binding site" evidence="2">
    <location>
        <position position="22"/>
    </location>
    <ligand>
        <name>substrate</name>
    </ligand>
</feature>
<feature type="binding site" evidence="2">
    <location>
        <begin position="82"/>
        <end position="83"/>
    </location>
    <ligand>
        <name>substrate</name>
    </ligand>
</feature>
<feature type="binding site" evidence="2">
    <location>
        <begin position="143"/>
        <end position="147"/>
    </location>
    <ligand>
        <name>substrate</name>
    </ligand>
</feature>
<feature type="binding site" evidence="2">
    <location>
        <position position="237"/>
    </location>
    <ligand>
        <name>substrate</name>
    </ligand>
</feature>
<dbReference type="EC" id="3.1.1.85" evidence="2"/>
<dbReference type="EMBL" id="BA000021">
    <property type="protein sequence ID" value="BAC24731.1"/>
    <property type="molecule type" value="Genomic_DNA"/>
</dbReference>
<dbReference type="SMR" id="Q8D1X1"/>
<dbReference type="STRING" id="36870.gene:10369094"/>
<dbReference type="ESTHER" id="wigbr-BIOH">
    <property type="family name" value="BioH"/>
</dbReference>
<dbReference type="MEROPS" id="S33.994"/>
<dbReference type="KEGG" id="wbr:bioH"/>
<dbReference type="eggNOG" id="COG0596">
    <property type="taxonomic scope" value="Bacteria"/>
</dbReference>
<dbReference type="HOGENOM" id="CLU_020336_12_2_6"/>
<dbReference type="OrthoDB" id="9780744at2"/>
<dbReference type="UniPathway" id="UPA00078"/>
<dbReference type="Proteomes" id="UP000000562">
    <property type="component" value="Chromosome"/>
</dbReference>
<dbReference type="GO" id="GO:0005737">
    <property type="term" value="C:cytoplasm"/>
    <property type="evidence" value="ECO:0007669"/>
    <property type="project" value="UniProtKB-SubCell"/>
</dbReference>
<dbReference type="GO" id="GO:0016020">
    <property type="term" value="C:membrane"/>
    <property type="evidence" value="ECO:0007669"/>
    <property type="project" value="TreeGrafter"/>
</dbReference>
<dbReference type="GO" id="GO:0090499">
    <property type="term" value="F:pimelyl-[acyl-carrier protein] methyl ester esterase activity"/>
    <property type="evidence" value="ECO:0007669"/>
    <property type="project" value="UniProtKB-EC"/>
</dbReference>
<dbReference type="GO" id="GO:0009102">
    <property type="term" value="P:biotin biosynthetic process"/>
    <property type="evidence" value="ECO:0007669"/>
    <property type="project" value="UniProtKB-UniRule"/>
</dbReference>
<dbReference type="Gene3D" id="3.40.50.1820">
    <property type="entry name" value="alpha/beta hydrolase"/>
    <property type="match status" value="1"/>
</dbReference>
<dbReference type="HAMAP" id="MF_01260">
    <property type="entry name" value="Carboxylester"/>
    <property type="match status" value="1"/>
</dbReference>
<dbReference type="InterPro" id="IPR000073">
    <property type="entry name" value="AB_hydrolase_1"/>
</dbReference>
<dbReference type="InterPro" id="IPR029058">
    <property type="entry name" value="AB_hydrolase_fold"/>
</dbReference>
<dbReference type="InterPro" id="IPR050266">
    <property type="entry name" value="AB_hydrolase_sf"/>
</dbReference>
<dbReference type="InterPro" id="IPR010076">
    <property type="entry name" value="BioH"/>
</dbReference>
<dbReference type="NCBIfam" id="TIGR01738">
    <property type="entry name" value="bioH"/>
    <property type="match status" value="1"/>
</dbReference>
<dbReference type="PANTHER" id="PTHR43798:SF31">
    <property type="entry name" value="AB HYDROLASE SUPERFAMILY PROTEIN YCLE"/>
    <property type="match status" value="1"/>
</dbReference>
<dbReference type="PANTHER" id="PTHR43798">
    <property type="entry name" value="MONOACYLGLYCEROL LIPASE"/>
    <property type="match status" value="1"/>
</dbReference>
<dbReference type="Pfam" id="PF00561">
    <property type="entry name" value="Abhydrolase_1"/>
    <property type="match status" value="1"/>
</dbReference>
<dbReference type="SUPFAM" id="SSF53474">
    <property type="entry name" value="alpha/beta-Hydrolases"/>
    <property type="match status" value="1"/>
</dbReference>
<keyword id="KW-0093">Biotin biosynthesis</keyword>
<keyword id="KW-0963">Cytoplasm</keyword>
<keyword id="KW-0378">Hydrolase</keyword>
<keyword id="KW-1185">Reference proteome</keyword>
<keyword id="KW-0719">Serine esterase</keyword>
<accession>Q8D1X1</accession>
<comment type="function">
    <text evidence="2">The physiological role of BioH is to remove the methyl group introduced by BioC when the pimeloyl moiety is complete. It allows to synthesize pimeloyl-ACP via the fatty acid synthetic pathway through the hydrolysis of the ester bonds of pimeloyl-ACP esters.</text>
</comment>
<comment type="catalytic activity">
    <reaction evidence="2">
        <text>6-carboxyhexanoyl-[ACP] methyl ester + H2O = 6-carboxyhexanoyl-[ACP] + methanol + H(+)</text>
        <dbReference type="Rhea" id="RHEA:42700"/>
        <dbReference type="Rhea" id="RHEA-COMP:9955"/>
        <dbReference type="Rhea" id="RHEA-COMP:10186"/>
        <dbReference type="ChEBI" id="CHEBI:15377"/>
        <dbReference type="ChEBI" id="CHEBI:15378"/>
        <dbReference type="ChEBI" id="CHEBI:17790"/>
        <dbReference type="ChEBI" id="CHEBI:78846"/>
        <dbReference type="ChEBI" id="CHEBI:82735"/>
        <dbReference type="EC" id="3.1.1.85"/>
    </reaction>
</comment>
<comment type="pathway">
    <text evidence="2">Cofactor biosynthesis; biotin biosynthesis.</text>
</comment>
<comment type="subunit">
    <text evidence="2">Monomer.</text>
</comment>
<comment type="subcellular location">
    <subcellularLocation>
        <location evidence="2">Cytoplasm</location>
    </subcellularLocation>
</comment>
<comment type="similarity">
    <text evidence="2">Belongs to the AB hydrolase superfamily. Carboxylesterase BioH family.</text>
</comment>
<name>BIOH_WIGBR</name>